<accession>P9WIX3</accession>
<accession>L0TDB2</accession>
<accession>P65565</accession>
<accession>P95171</accession>
<dbReference type="EC" id="7.1.1.-" evidence="1"/>
<dbReference type="EMBL" id="AL123456">
    <property type="protein sequence ID" value="CCP45966.1"/>
    <property type="molecule type" value="Genomic_DNA"/>
</dbReference>
<dbReference type="PIR" id="D70648">
    <property type="entry name" value="D70648"/>
</dbReference>
<dbReference type="RefSeq" id="NP_217671.1">
    <property type="nucleotide sequence ID" value="NC_000962.3"/>
</dbReference>
<dbReference type="RefSeq" id="WP_003416452.1">
    <property type="nucleotide sequence ID" value="NZ_NVQJ01000019.1"/>
</dbReference>
<dbReference type="SMR" id="P9WIX3"/>
<dbReference type="FunCoup" id="P9WIX3">
    <property type="interactions" value="67"/>
</dbReference>
<dbReference type="STRING" id="83332.Rv3155"/>
<dbReference type="PaxDb" id="83332-Rv3155"/>
<dbReference type="DNASU" id="888764"/>
<dbReference type="GeneID" id="45427142"/>
<dbReference type="GeneID" id="888764"/>
<dbReference type="KEGG" id="mtu:Rv3155"/>
<dbReference type="KEGG" id="mtv:RVBD_3155"/>
<dbReference type="TubercuList" id="Rv3155"/>
<dbReference type="eggNOG" id="COG0713">
    <property type="taxonomic scope" value="Bacteria"/>
</dbReference>
<dbReference type="InParanoid" id="P9WIX3"/>
<dbReference type="OrthoDB" id="9810120at2"/>
<dbReference type="PhylomeDB" id="P9WIX3"/>
<dbReference type="Proteomes" id="UP000001584">
    <property type="component" value="Chromosome"/>
</dbReference>
<dbReference type="GO" id="GO:0030964">
    <property type="term" value="C:NADH dehydrogenase complex"/>
    <property type="evidence" value="ECO:0000318"/>
    <property type="project" value="GO_Central"/>
</dbReference>
<dbReference type="GO" id="GO:0005886">
    <property type="term" value="C:plasma membrane"/>
    <property type="evidence" value="ECO:0007669"/>
    <property type="project" value="UniProtKB-SubCell"/>
</dbReference>
<dbReference type="GO" id="GO:0050136">
    <property type="term" value="F:NADH:ubiquinone reductase (non-electrogenic) activity"/>
    <property type="evidence" value="ECO:0007669"/>
    <property type="project" value="UniProtKB-UniRule"/>
</dbReference>
<dbReference type="GO" id="GO:0048038">
    <property type="term" value="F:quinone binding"/>
    <property type="evidence" value="ECO:0007669"/>
    <property type="project" value="UniProtKB-KW"/>
</dbReference>
<dbReference type="GO" id="GO:0042773">
    <property type="term" value="P:ATP synthesis coupled electron transport"/>
    <property type="evidence" value="ECO:0007669"/>
    <property type="project" value="InterPro"/>
</dbReference>
<dbReference type="FunFam" id="1.10.287.3510:FF:000001">
    <property type="entry name" value="NADH-quinone oxidoreductase subunit K"/>
    <property type="match status" value="1"/>
</dbReference>
<dbReference type="Gene3D" id="1.10.287.3510">
    <property type="match status" value="1"/>
</dbReference>
<dbReference type="HAMAP" id="MF_01456">
    <property type="entry name" value="NDH1_NuoK"/>
    <property type="match status" value="1"/>
</dbReference>
<dbReference type="InterPro" id="IPR001133">
    <property type="entry name" value="NADH_UbQ_OxRdtase_chain4L/K"/>
</dbReference>
<dbReference type="InterPro" id="IPR039428">
    <property type="entry name" value="NUOK/Mnh_C1-like"/>
</dbReference>
<dbReference type="NCBIfam" id="NF004320">
    <property type="entry name" value="PRK05715.1-2"/>
    <property type="match status" value="1"/>
</dbReference>
<dbReference type="PANTHER" id="PTHR11434:SF21">
    <property type="entry name" value="NADH DEHYDROGENASE SUBUNIT 4L-RELATED"/>
    <property type="match status" value="1"/>
</dbReference>
<dbReference type="PANTHER" id="PTHR11434">
    <property type="entry name" value="NADH-UBIQUINONE OXIDOREDUCTASE SUBUNIT ND4L"/>
    <property type="match status" value="1"/>
</dbReference>
<dbReference type="Pfam" id="PF00420">
    <property type="entry name" value="Oxidored_q2"/>
    <property type="match status" value="1"/>
</dbReference>
<comment type="function">
    <text evidence="1">NDH-1 shuttles electrons from NADH, via FMN and iron-sulfur (Fe-S) centers, to quinones in the respiratory chain. The immediate electron acceptor for the enzyme in this species is believed to be a menaquinone. Couples the redox reaction to proton translocation (for every two electrons transferred, four hydrogen ions are translocated across the cytoplasmic membrane), and thus conserves the redox energy in a proton gradient.</text>
</comment>
<comment type="catalytic activity">
    <reaction evidence="1">
        <text>a quinone + NADH + 5 H(+)(in) = a quinol + NAD(+) + 4 H(+)(out)</text>
        <dbReference type="Rhea" id="RHEA:57888"/>
        <dbReference type="ChEBI" id="CHEBI:15378"/>
        <dbReference type="ChEBI" id="CHEBI:24646"/>
        <dbReference type="ChEBI" id="CHEBI:57540"/>
        <dbReference type="ChEBI" id="CHEBI:57945"/>
        <dbReference type="ChEBI" id="CHEBI:132124"/>
    </reaction>
</comment>
<comment type="subunit">
    <text evidence="1">NDH-1 is composed of 14 different subunits. Subunits NuoA, H, J, K, L, M, N constitute the membrane sector of the complex.</text>
</comment>
<comment type="subcellular location">
    <subcellularLocation>
        <location>Cell membrane</location>
        <topology>Multi-pass membrane protein</topology>
    </subcellularLocation>
</comment>
<comment type="similarity">
    <text evidence="1">Belongs to the complex I subunit 4L family.</text>
</comment>
<proteinExistence type="inferred from homology"/>
<protein>
    <recommendedName>
        <fullName evidence="1">NADH-quinone oxidoreductase subunit K</fullName>
        <ecNumber evidence="1">7.1.1.-</ecNumber>
    </recommendedName>
    <alternativeName>
        <fullName evidence="1">NADH dehydrogenase I subunit K</fullName>
    </alternativeName>
    <alternativeName>
        <fullName evidence="1">NDH-1 subunit K</fullName>
    </alternativeName>
</protein>
<name>NUOK_MYCTU</name>
<gene>
    <name evidence="1" type="primary">nuoK</name>
    <name type="ordered locus">Rv3155</name>
    <name type="ORF">MTCY03A2.03c</name>
</gene>
<organism>
    <name type="scientific">Mycobacterium tuberculosis (strain ATCC 25618 / H37Rv)</name>
    <dbReference type="NCBI Taxonomy" id="83332"/>
    <lineage>
        <taxon>Bacteria</taxon>
        <taxon>Bacillati</taxon>
        <taxon>Actinomycetota</taxon>
        <taxon>Actinomycetes</taxon>
        <taxon>Mycobacteriales</taxon>
        <taxon>Mycobacteriaceae</taxon>
        <taxon>Mycobacterium</taxon>
        <taxon>Mycobacterium tuberculosis complex</taxon>
    </lineage>
</organism>
<keyword id="KW-1003">Cell membrane</keyword>
<keyword id="KW-0472">Membrane</keyword>
<keyword id="KW-0520">NAD</keyword>
<keyword id="KW-0874">Quinone</keyword>
<keyword id="KW-1185">Reference proteome</keyword>
<keyword id="KW-1278">Translocase</keyword>
<keyword id="KW-0812">Transmembrane</keyword>
<keyword id="KW-1133">Transmembrane helix</keyword>
<keyword id="KW-0813">Transport</keyword>
<feature type="chain" id="PRO_0000118532" description="NADH-quinone oxidoreductase subunit K">
    <location>
        <begin position="1"/>
        <end position="99"/>
    </location>
</feature>
<feature type="transmembrane region" description="Helical" evidence="1">
    <location>
        <begin position="3"/>
        <end position="23"/>
    </location>
</feature>
<feature type="transmembrane region" description="Helical" evidence="1">
    <location>
        <begin position="28"/>
        <end position="48"/>
    </location>
</feature>
<feature type="transmembrane region" description="Helical" evidence="1">
    <location>
        <begin position="59"/>
        <end position="79"/>
    </location>
</feature>
<reference key="1">
    <citation type="journal article" date="1998" name="Nature">
        <title>Deciphering the biology of Mycobacterium tuberculosis from the complete genome sequence.</title>
        <authorList>
            <person name="Cole S.T."/>
            <person name="Brosch R."/>
            <person name="Parkhill J."/>
            <person name="Garnier T."/>
            <person name="Churcher C.M."/>
            <person name="Harris D.E."/>
            <person name="Gordon S.V."/>
            <person name="Eiglmeier K."/>
            <person name="Gas S."/>
            <person name="Barry C.E. III"/>
            <person name="Tekaia F."/>
            <person name="Badcock K."/>
            <person name="Basham D."/>
            <person name="Brown D."/>
            <person name="Chillingworth T."/>
            <person name="Connor R."/>
            <person name="Davies R.M."/>
            <person name="Devlin K."/>
            <person name="Feltwell T."/>
            <person name="Gentles S."/>
            <person name="Hamlin N."/>
            <person name="Holroyd S."/>
            <person name="Hornsby T."/>
            <person name="Jagels K."/>
            <person name="Krogh A."/>
            <person name="McLean J."/>
            <person name="Moule S."/>
            <person name="Murphy L.D."/>
            <person name="Oliver S."/>
            <person name="Osborne J."/>
            <person name="Quail M.A."/>
            <person name="Rajandream M.A."/>
            <person name="Rogers J."/>
            <person name="Rutter S."/>
            <person name="Seeger K."/>
            <person name="Skelton S."/>
            <person name="Squares S."/>
            <person name="Squares R."/>
            <person name="Sulston J.E."/>
            <person name="Taylor K."/>
            <person name="Whitehead S."/>
            <person name="Barrell B.G."/>
        </authorList>
    </citation>
    <scope>NUCLEOTIDE SEQUENCE [LARGE SCALE GENOMIC DNA]</scope>
    <source>
        <strain>ATCC 25618 / H37Rv</strain>
    </source>
</reference>
<evidence type="ECO:0000255" key="1">
    <source>
        <dbReference type="HAMAP-Rule" id="MF_01456"/>
    </source>
</evidence>
<sequence length="99" mass="10858">MNPANYLYLSVLLFTIGASGVLLRRNAIVMFMCVELMLNAVNLAFVTFARMHGHLDAQMIAFFTMVVAACEVVVGLAIIMTIFRTRKSASVDDANLLKG</sequence>